<comment type="function">
    <text evidence="3">Plays a role in viral genome replication by driving entry of quiescent cells into the cell cycle. Stimulation of progression from G1 to S phase allows the virus to efficiently use the cellular DNA replicating machinery to achieve viral genome replication. E1A protein has both transforming and trans-activating activities. Induces the disassembly of the E2F1 transcription factor from RB1 by direct competition for the same binding site on RB1, with subsequent transcriptional activation of E2F1-regulated S-phase genes and of the E2 region of the adenoviral genome. Release of E2F1 leads to the ARF-mediated inhibition of MDM2 and causes TP53/p53 to accumulate because it is not targeted for degradation by MDM2-mediated ubiquitination anymore. This increase in TP53, in turn, would arrest the cell proliferation and direct its death but this effect is counteracted by the viral protein E1B-55K. Inactivation of the ability of RB1 to arrest the cell cycle is critical for cellular transformation, uncontrolled cellular growth and proliferation induced by viral infection. Interaction with RBX1 and CUL1 inhibits ubiquitination of the proteins targeted by SCF(FBXW7) ubiquitin ligase complex, and may be linked to unregulated host cell proliferation. The tumorigenesis-restraining activity of E1A may be related to the disruption of the host CtBP-CtIP complex through the CtBP binding motif.</text>
</comment>
<comment type="subunit">
    <text evidence="2 3">Interacts with host UBE2I; this interaction interferes with polySUMOylation. Interacts with host RB1; this interaction induces the aberrant dissociation of RB1-E2F1 complex thereby disrupting the activity of RB1 and activating E2F1-regulated genes. Interacts with host ATF7; the interaction enhances ATF7-mediated viral transactivation activity which requires the zinc binding domains of both proteins. Isoform early E1A 32 kDa protein and isoform early E1A 26 kDa protein interact (via N-terminus) with CUL1 and E3 ubiquitin ligase RBX1; these interactions inhibit RBX1-CUL1-dependent elongation reaction of ubiquitin chains and attenuate ubiquitination of SCF(FBXW7) target proteins. Interacts (via PXLXP motif) with host ZMYND11/BS69 (via MYND-type zinc finger); this interaction inhibits E1A mediated transactivation. Interacts with host EP300; this interaction stimulates the acetylation of RB1 by recruiting EP300 and RB1 into a multimeric-protein complex. Interacts with host CTBP1 and CTBP2; this interaction seems to potentiate viral replication. Interacts with host DCAF7. Interacts with host DYRK1A. Interacts with host KPNA4; this interaction allows E1A import into the host nucleus. Interacts with host EP400; this interaction stabilizes MYC. Interacts with host TBP protein; this interaction probably disrupts the TBP-TATA complex.</text>
</comment>
<comment type="subcellular location">
    <subcellularLocation>
        <location evidence="3">Host nucleus</location>
    </subcellularLocation>
</comment>
<comment type="similarity">
    <text evidence="6">Belongs to the adenoviridae E1A protein family.</text>
</comment>
<keyword id="KW-0010">Activator</keyword>
<keyword id="KW-0244">Early protein</keyword>
<keyword id="KW-1078">G1/S host cell cycle checkpoint dysregulation by virus</keyword>
<keyword id="KW-1048">Host nucleus</keyword>
<keyword id="KW-0945">Host-virus interaction</keyword>
<keyword id="KW-1090">Inhibition of host innate immune response by virus</keyword>
<keyword id="KW-1114">Inhibition of host interferon signaling pathway by virus</keyword>
<keyword id="KW-1105">Inhibition of host STAT1 by virus</keyword>
<keyword id="KW-0922">Interferon antiviral system evasion</keyword>
<keyword id="KW-0479">Metal-binding</keyword>
<keyword id="KW-1121">Modulation of host cell cycle by virus</keyword>
<keyword id="KW-1185">Reference proteome</keyword>
<keyword id="KW-0804">Transcription</keyword>
<keyword id="KW-0805">Transcription regulation</keyword>
<keyword id="KW-0899">Viral immunoevasion</keyword>
<keyword id="KW-0862">Zinc</keyword>
<keyword id="KW-0863">Zinc-finger</keyword>
<organism>
    <name type="scientific">Canine adenovirus serotype 2 (strain Toronto A 26-61)</name>
    <name type="common">CAdV-2</name>
    <name type="synonym">Canine adenovirus 2 (strain Toronto A 26-61)</name>
    <dbReference type="NCBI Taxonomy" id="69152"/>
    <lineage>
        <taxon>Viruses</taxon>
        <taxon>Varidnaviria</taxon>
        <taxon>Bamfordvirae</taxon>
        <taxon>Preplasmiviricota</taxon>
        <taxon>Tectiliviricetes</taxon>
        <taxon>Rowavirales</taxon>
        <taxon>Adenoviridae</taxon>
        <taxon>Mastadenovirus</taxon>
        <taxon>Canine mastadenovirus A</taxon>
    </lineage>
</organism>
<dbReference type="EMBL" id="J04368">
    <property type="protein sequence ID" value="AAA42470.1"/>
    <property type="molecule type" value="Genomic_DNA"/>
</dbReference>
<dbReference type="EMBL" id="U77082">
    <property type="protein sequence ID" value="AAB38711.1"/>
    <property type="molecule type" value="Genomic_DNA"/>
</dbReference>
<dbReference type="PIR" id="A34165">
    <property type="entry name" value="WMADC2"/>
</dbReference>
<dbReference type="Proteomes" id="UP000118097">
    <property type="component" value="Segment"/>
</dbReference>
<dbReference type="GO" id="GO:0042025">
    <property type="term" value="C:host cell nucleus"/>
    <property type="evidence" value="ECO:0007669"/>
    <property type="project" value="UniProtKB-SubCell"/>
</dbReference>
<dbReference type="GO" id="GO:0008270">
    <property type="term" value="F:zinc ion binding"/>
    <property type="evidence" value="ECO:0007669"/>
    <property type="project" value="UniProtKB-KW"/>
</dbReference>
<dbReference type="GO" id="GO:0006355">
    <property type="term" value="P:regulation of DNA-templated transcription"/>
    <property type="evidence" value="ECO:0007669"/>
    <property type="project" value="InterPro"/>
</dbReference>
<dbReference type="GO" id="GO:0039645">
    <property type="term" value="P:symbiont-mediated perturbation of host cell cycle G1/S transition checkpoint"/>
    <property type="evidence" value="ECO:0007669"/>
    <property type="project" value="UniProtKB-KW"/>
</dbReference>
<dbReference type="GO" id="GO:0052170">
    <property type="term" value="P:symbiont-mediated suppression of host innate immune response"/>
    <property type="evidence" value="ECO:0007669"/>
    <property type="project" value="UniProtKB-KW"/>
</dbReference>
<dbReference type="GO" id="GO:0039563">
    <property type="term" value="P:symbiont-mediated suppression of host JAK-STAT cascade via inhibition of STAT1 activity"/>
    <property type="evidence" value="ECO:0007669"/>
    <property type="project" value="UniProtKB-KW"/>
</dbReference>
<dbReference type="GO" id="GO:0039502">
    <property type="term" value="P:symbiont-mediated suppression of host type I interferon-mediated signaling pathway"/>
    <property type="evidence" value="ECO:0007669"/>
    <property type="project" value="UniProtKB-KW"/>
</dbReference>
<dbReference type="InterPro" id="IPR014410">
    <property type="entry name" value="Aden_E1A"/>
</dbReference>
<dbReference type="PIRSF" id="PIRSF003669">
    <property type="entry name" value="Aden_E1A"/>
    <property type="match status" value="1"/>
</dbReference>
<reference key="1">
    <citation type="journal article" date="1989" name="Virology">
        <title>Nucleotide sequence of E1 region of canine adenovirus type 2.</title>
        <authorList>
            <person name="Shibata R."/>
            <person name="Shinagawa M."/>
            <person name="Iida Y."/>
            <person name="Tsukiyama T."/>
        </authorList>
    </citation>
    <scope>NUCLEOTIDE SEQUENCE [GENOMIC DNA]</scope>
</reference>
<reference key="2">
    <citation type="submission" date="1996-12" db="EMBL/GenBank/DDBJ databases">
        <title>Complete DNA sequence and genomic organization of canine adenovirus type 2.</title>
        <authorList>
            <person name="Campbell J.B."/>
            <person name="Zhao Y."/>
        </authorList>
    </citation>
    <scope>NUCLEOTIDE SEQUENCE [LARGE SCALE GENOMIC DNA]</scope>
</reference>
<feature type="chain" id="PRO_0000221702" description="Early E1A protein">
    <location>
        <begin position="1"/>
        <end position="232"/>
    </location>
</feature>
<feature type="zinc finger region" evidence="2">
    <location>
        <begin position="146"/>
        <end position="164"/>
    </location>
</feature>
<feature type="region of interest" description="Interaction with RB1 in competition with E2F1" evidence="1">
    <location>
        <begin position="40"/>
        <end position="48"/>
    </location>
</feature>
<feature type="region of interest" description="Disordered" evidence="5">
    <location>
        <begin position="69"/>
        <end position="97"/>
    </location>
</feature>
<feature type="region of interest" description="Disordered" evidence="5">
    <location>
        <begin position="175"/>
        <end position="232"/>
    </location>
</feature>
<feature type="short sequence motif" description="LXCXE motif, interaction with host RB1" evidence="4">
    <location>
        <begin position="107"/>
        <end position="111"/>
    </location>
</feature>
<feature type="short sequence motif" description="PXDLS motif, CTBP-binding" evidence="1">
    <location>
        <begin position="222"/>
        <end position="226"/>
    </location>
</feature>
<feature type="short sequence motif" description="Nuclear localization signal" evidence="4">
    <location>
        <begin position="228"/>
        <end position="232"/>
    </location>
</feature>
<feature type="compositionally biased region" description="Low complexity" evidence="5">
    <location>
        <begin position="69"/>
        <end position="84"/>
    </location>
</feature>
<feature type="compositionally biased region" description="Pro residues" evidence="5">
    <location>
        <begin position="85"/>
        <end position="97"/>
    </location>
</feature>
<evidence type="ECO:0000250" key="1"/>
<evidence type="ECO:0000250" key="2">
    <source>
        <dbReference type="UniProtKB" id="P03254"/>
    </source>
</evidence>
<evidence type="ECO:0000250" key="3">
    <source>
        <dbReference type="UniProtKB" id="P03255"/>
    </source>
</evidence>
<evidence type="ECO:0000255" key="4"/>
<evidence type="ECO:0000256" key="5">
    <source>
        <dbReference type="SAM" id="MobiDB-lite"/>
    </source>
</evidence>
<evidence type="ECO:0000305" key="6"/>
<proteinExistence type="inferred from homology"/>
<sequence>MKYTIVPAPRNLHDYVLELLEEWQPDCLDCEYSHGSPSPPTLHDLFDVELETSHSPFVGLCDSCAEADTDSSASTEADSGFSPLSTPPVSPIPPHPTSPASISDDMLLCLEEMPTFDDEDEVRSAATTFERWENTFDPHVGPIFGCLRCAFYQEQDDNALCGLCYLKALAEEPASAGAEEEDDEVIFVSAKPGGRKRSAATPCEPDGVSKRPCVPEPEQTEPLDLSLKPRPN</sequence>
<organismHost>
    <name type="scientific">Canis lupus familiaris</name>
    <name type="common">Dog</name>
    <name type="synonym">Canis familiaris</name>
    <dbReference type="NCBI Taxonomy" id="9615"/>
</organismHost>
<name>E1A_ADECT</name>
<protein>
    <recommendedName>
        <fullName>Early E1A protein</fullName>
    </recommendedName>
    <alternativeName>
        <fullName>Early E1A 25 kDa protein</fullName>
    </alternativeName>
</protein>
<accession>P14264</accession>